<proteinExistence type="evidence at protein level"/>
<name>GSDMB_HUMAN</name>
<organism>
    <name type="scientific">Homo sapiens</name>
    <name type="common">Human</name>
    <dbReference type="NCBI Taxonomy" id="9606"/>
    <lineage>
        <taxon>Eukaryota</taxon>
        <taxon>Metazoa</taxon>
        <taxon>Chordata</taxon>
        <taxon>Craniata</taxon>
        <taxon>Vertebrata</taxon>
        <taxon>Euteleostomi</taxon>
        <taxon>Mammalia</taxon>
        <taxon>Eutheria</taxon>
        <taxon>Euarchontoglires</taxon>
        <taxon>Primates</taxon>
        <taxon>Haplorrhini</taxon>
        <taxon>Catarrhini</taxon>
        <taxon>Hominidae</taxon>
        <taxon>Homo</taxon>
    </lineage>
</organism>
<comment type="function">
    <molecule>Gasdermin-B</molecule>
    <text evidence="13 15">Precursor of a pore-forming protein that acts as a downstream mediator of granzyme-mediated cell death (PubMed:32299851). This form constitutes the precursor of the pore-forming protein: upon cleavage, the released N-terminal moiety (Gasdermin-B, N-terminal) binds to membranes and forms pores, triggering pyroptosis (PubMed:32299851). Also acts as a regulator of epithelial cell repair independently of programmed cell death: translocates to the plasma membrane and promotes epithelial maintenance and repair by regulating PTK2/FAK-mediated phosphorylation of PDGFA (PubMed:35021065).</text>
</comment>
<comment type="function">
    <molecule>Gasdermin-B, N-terminal</molecule>
    <text evidence="11 13 14 16 17 19 20">Pore-forming protein produced by cleavage by granzyme A (GZMA), which causes membrane permeabilization and pyroptosis in target cells of cytotoxic T and natural killer (NK) cells (PubMed:27281216, PubMed:32299851). Key downstream mediator of granzyme-mediated cell death: (1) granzyme A (GZMA), delivered to target cells from cytotoxic T- and NK-cells, (2) specifically cleaves Gasdermin-B to generate this form (PubMed:32299851). After cleavage, moves to the plasma membrane, homooligomerizes within the membrane and forms pores of 10-15 nanometers (nm) of inner diameter, triggering pyroptosis (PubMed:32299851, PubMed:36599845, PubMed:36991122, PubMed:36991125). The different isoforms recognize and bind different phospholipids on membranes, promoting cell death of different target cells (PubMed:34022140, PubMed:36157507, PubMed:36991122, PubMed:36991125).</text>
</comment>
<comment type="function">
    <molecule>Isoform 4</molecule>
    <text evidence="12 16 18 19 20">Precursor of a pore-forming protein that acts as a downstream mediator of granzyme-mediated cell death and mediates pyroptosis (PubMed:28154144, PubMed:36157507, PubMed:36899106, PubMed:36991122, PubMed:36991125). Following cleavage and activation by granzyme A (GZMA), the N-terminal part binds to membrane inner leaflet lipids, homooligomerizes within the human plasma membrane and forms pores of 10-15 nanometers (nm) of inner diameter, triggering pyroptosis (PubMed:28154144, PubMed:36157507, PubMed:36899106, PubMed:36991122, PubMed:36991125). Recognizes and binds membrane inner leaflet lipids of human cells, such as phosphatidylinositol 4-phosphate, phosphatidylinositol 5-phosphate, bisphosphorylated phosphatidylinositols, such as phosphatidylinositol (4,5)-bisphosphate, and more weakly to phosphatidic acid (PubMed:28154144, PubMed:36157507). Also binds sufatide, a component of the apical membrane of epithelial cells (PubMed:28154144).</text>
</comment>
<comment type="function">
    <molecule>Isoform 6</molecule>
    <text evidence="18 19 20">Precursor of a pore-forming protein that acts as a downstream mediator of granzyme-mediated cell death and mediates pyroptosis of human cells (PubMed:36899106, PubMed:36991122, PubMed:36991125). Following cleavage and activation by granzyme A (GZMA), the N-terminal part binds to membrane inner leaflet lipids, homooligomerizes within the human plasma membrane and forms pores of 10-15 nanometers (nm) of inner diameter, triggering pyroptosis (PubMed:36899106, PubMed:36991122, PubMed:36991125).</text>
</comment>
<comment type="function">
    <molecule>Isoform 1</molecule>
    <text evidence="14">Precursor of a pore-forming protein that acts as a downstream mediator of granzyme-mediated cell death and specifically mediates cell death of Gram-negative bacteria in response to infection (PubMed:34022140). Following cleavage and activation by granzyme A (GZMA), the N-terminal part recognizes and binds phospholipids found on Gram-negative bacterial membranes, such as lipid A and cariolipin, homooligomerizes within the bacterial membranes and forms pores, triggering pyroptosis followed by cell death (PubMed:34022140). In contrast to isoform 4, does not bind to membrane inner leaflet lipids of host human cell, such as phosphatidylinositol 4-phosphate, phosphatidylinositol 5-phosphate, bisphosphorylated phosphatidylinositols, such as phosphatidylinositol (4,5)-bisphosphate (PubMed:34022140).</text>
</comment>
<comment type="function">
    <molecule>Isoform 2</molecule>
    <text evidence="18 19 20">Not able to trigger pyroptosis.</text>
</comment>
<comment type="function">
    <molecule>Isoform 3</molecule>
    <text evidence="18 19 20">Not able to trigger pyroptosis.</text>
</comment>
<comment type="activity regulation">
    <molecule>Gasdermin-B</molecule>
    <text evidence="13 19 20">The full-length protein before cleavage is inactive: intramolecular interactions between N- and C-terminal domains mediate autoinhibition in the absence of activation signal (PubMed:36991122, PubMed:36991125). The intrinsic pyroptosis-inducing activity is carried by the released N-terminal moiety (Gasdermin-B, N-terminal) following cleavage by granzyme A (GZMA) (PubMed:32299851).</text>
</comment>
<comment type="subunit">
    <molecule>Gasdermin-B, N-terminal</molecule>
    <text evidence="17 19 20">Homooligomer; homooligomeric ring-shaped pore complex containing 24-26 subunits when inserted in the membrane.</text>
</comment>
<comment type="subcellular location">
    <molecule>Gasdermin-B</molecule>
    <subcellularLocation>
        <location evidence="9">Cytoplasm</location>
    </subcellularLocation>
    <text evidence="9">Vesicular localization in the apical region of gastric chief cells and colonic surface mucous cells, and the basal region of neuroendocrine cells.</text>
</comment>
<comment type="subcellular location">
    <molecule>Gasdermin-B, N-terminal</molecule>
    <subcellularLocation>
        <location evidence="16 18">Cell membrane</location>
        <topology evidence="1">Multi-pass membrane protein</topology>
    </subcellularLocation>
</comment>
<comment type="alternative products">
    <event type="alternative splicing"/>
    <isoform>
        <id>Q8TAX9-4</id>
        <name evidence="28">4</name>
        <name evidence="27">GSDMB3</name>
        <name evidence="29">Isoform 4</name>
        <sequence type="displayed"/>
    </isoform>
    <isoform>
        <id>Q8TAX9-1</id>
        <name evidence="28">1</name>
        <sequence type="described" ref="VSP_061489 VSP_061490"/>
    </isoform>
    <isoform>
        <id>Q8TAX9-2</id>
        <name evidence="28 29">2</name>
        <name evidence="27">GSDMB2</name>
        <sequence type="described" ref="VSP_061487"/>
    </isoform>
    <isoform>
        <id>Q8TAX9-3</id>
        <name evidence="28">3</name>
        <name evidence="27">GSDMB1</name>
        <name evidence="29">Isoform 1</name>
        <sequence type="described" ref="VSP_061488"/>
    </isoform>
    <isoform>
        <id>Q8TAX9-5</id>
        <name>5</name>
        <sequence type="described" ref="VSP_061486"/>
    </isoform>
    <isoform>
        <id>Q8TAX9-6</id>
        <name evidence="28">6</name>
        <name evidence="27">GSDMB4</name>
        <name evidence="29">Isoform 4</name>
        <sequence type="described" ref="VSP_061490"/>
    </isoform>
    <text>Isoforms expression varies between tumor and non-tumor cells and changes in the regulation of isoforms transcription and translation may be seen in the development of gastrointestinal and hepatic cancers.</text>
</comment>
<comment type="tissue specificity">
    <text evidence="10">In the gastrointestinal tract, expressed in proliferating cells, including in the basal cell layer of esophagus and in isthmus/neck of stomach.</text>
</comment>
<comment type="induction">
    <text evidence="13 15">Expression is induced by interferon-gamma (IFNG) (PubMed:32299851). Overexpressed in inflammatory bowel disease (IBD) (PubMed:35021065).</text>
</comment>
<comment type="domain">
    <text evidence="1">Intramolecular interactions between N- and C-terminal domains are important for autoinhibition in the absence of activation signal. The intrinsic pyroptosis-inducing activity is carried by the N-terminal domain.</text>
</comment>
<comment type="PTM">
    <text evidence="13 14 16 18 20">Cleavage by granzyme A (GZMA) relieves autoinhibition by releasing the N-terminal moiety (Gasdermin-B, N-terminal) that initiates pyroptosis (PubMed:32299851, PubMed:34022140, PubMed:36157507, PubMed:36899106, PubMed:36991125). Not cleaved by other granzymes (PubMed:32299851). Major cleavage site takes places after Lys-244; a minor cleavage site takes place after Lys-229 (PubMed:32299851). Cleavage by neutrophil elastase ELANE, inhibits its ability to trigger pyroptosis (PubMed:36899106).</text>
</comment>
<comment type="PTM">
    <text evidence="21">Palmitoylated.</text>
</comment>
<comment type="PTM">
    <text evidence="14 17 19 20">(Microbial infection) Ubiquitinated by S.flexneri IpaH7.8, leading to its degradation by the proteasome, thereby preventing its ability to form pores in bacterial-derived membranes.</text>
</comment>
<comment type="miscellaneous">
    <text evidence="6">Long terminal repeat (LTR) of endogenous retrovirus HERV-H with reverse orientation may serve as alternative promoters of GSDMB gene.</text>
</comment>
<comment type="miscellaneous">
    <molecule>Isoform 1</molecule>
    <text evidence="31">Non canonical splice junctions.</text>
</comment>
<comment type="miscellaneous">
    <text evidence="8">GSDMB may be used as predictive markers of cervical lymph node metastasis and may help, with a panel of other genes, to discriminate between primary tumors of oral squamous cell carcinoma that metastasize to cervical lymph node and those that do not metastasize.</text>
</comment>
<comment type="similarity">
    <text evidence="30">Belongs to the gasdermin family.</text>
</comment>
<comment type="online information" name="Atlas of Genetics and Cytogenetics in Oncology and Haematology">
    <link uri="https://atlasgeneticsoncology.org/gene/43972/GSDMB"/>
</comment>
<feature type="chain" id="PRO_0000329058" description="Gasdermin-B">
    <location>
        <begin position="1"/>
        <end position="416"/>
    </location>
</feature>
<feature type="chain" id="PRO_0000451672" description="Gasdermin-B, N-terminal" evidence="33">
    <location>
        <begin position="1"/>
        <end position="244"/>
    </location>
</feature>
<feature type="chain" id="PRO_0000451673" description="Gasdermin-B, C-terminal" evidence="33">
    <location>
        <begin position="245"/>
        <end position="416"/>
    </location>
</feature>
<feature type="transmembrane region" description="Beta stranded" evidence="19 20 39 40 41 42 43">
    <location>
        <begin position="83"/>
        <end position="101"/>
    </location>
</feature>
<feature type="transmembrane region" description="Beta stranded" evidence="19 20 39 40 41 42 43">
    <location>
        <begin position="102"/>
        <end position="125"/>
    </location>
</feature>
<feature type="transmembrane region" description="Beta stranded" evidence="19 20 39 40 41 42 43">
    <location>
        <begin position="167"/>
        <end position="183"/>
    </location>
</feature>
<feature type="transmembrane region" description="Beta stranded" evidence="19 20 39 40 41 42 43">
    <location>
        <begin position="184"/>
        <end position="198"/>
    </location>
</feature>
<feature type="region of interest" description="Triggers pyroptosis" evidence="11">
    <location>
        <begin position="1"/>
        <end position="280"/>
    </location>
</feature>
<feature type="region of interest" description="Disordered" evidence="3">
    <location>
        <begin position="229"/>
        <end position="250"/>
    </location>
</feature>
<feature type="coiled-coil region" evidence="2">
    <location>
        <begin position="248"/>
        <end position="276"/>
    </location>
</feature>
<feature type="site" description="Cleavage; by CAPS3, CAPS6 and CAPS9" evidence="32">
    <location>
        <begin position="91"/>
        <end position="92"/>
    </location>
</feature>
<feature type="site" description="Cleavage; by ELANE" evidence="18">
    <location>
        <begin position="220"/>
        <end position="221"/>
    </location>
</feature>
<feature type="site" description="Cleavage; by granzyme A" evidence="13">
    <location>
        <begin position="229"/>
        <end position="230"/>
    </location>
</feature>
<feature type="site" description="Cleavage; by granzyme A" evidence="13">
    <location>
        <begin position="244"/>
        <end position="245"/>
    </location>
</feature>
<feature type="cross-link" description="(Microbial infection) Glycyl lysine isopeptide (Lys-Gly) (interchain with G-Cter in ubiquitin)" evidence="19">
    <location>
        <position position="177"/>
    </location>
</feature>
<feature type="cross-link" description="(Microbial infection) Glycyl lysine isopeptide (Lys-Gly) (interchain with G-Cter in ubiquitin)" evidence="19">
    <location>
        <position position="190"/>
    </location>
</feature>
<feature type="cross-link" description="(Microbial infection) Glycyl lysine isopeptide (Lys-Gly) (interchain with G-Cter in ubiquitin)" evidence="19">
    <location>
        <position position="192"/>
    </location>
</feature>
<feature type="splice variant" id="VSP_061486" description="In isoform 5.">
    <location>
        <begin position="1"/>
        <end position="253"/>
    </location>
</feature>
<feature type="splice variant" id="VSP_061487" description="In isoform 2.">
    <original>NIHFRGKTKSFPEEKDGASSCLG</original>
    <variation>R</variation>
    <location>
        <begin position="221"/>
        <end position="243"/>
    </location>
</feature>
<feature type="splice variant" id="VSP_061488" description="In isoform 3.">
    <original>NIHFRGKTKSFPEE</original>
    <variation>K</variation>
    <location>
        <begin position="221"/>
        <end position="234"/>
    </location>
</feature>
<feature type="splice variant" id="VSP_061489" description="In isoform 1.">
    <original>N</original>
    <variation>SAGLD</variation>
    <location>
        <position position="221"/>
    </location>
</feature>
<feature type="splice variant" id="VSP_061490" description="In isoform 6 and isoform 1.">
    <location>
        <begin position="234"/>
        <end position="242"/>
    </location>
</feature>
<feature type="sequence variant" id="VAR_042632" description="In dbSNP:rs12450091.">
    <original>E</original>
    <variation>G</variation>
    <location>
        <position position="122"/>
    </location>
</feature>
<feature type="sequence variant" id="VAR_042633" description="In dbSNP:rs4619433.">
    <original>T</original>
    <variation>A</variation>
    <location>
        <position position="132"/>
    </location>
</feature>
<feature type="sequence variant" id="VAR_042634" description="In a breast cancer sample; somatic mutation." evidence="7">
    <original>D</original>
    <variation>G</variation>
    <location>
        <position position="250"/>
    </location>
</feature>
<feature type="sequence variant" id="VAR_042635" description="In dbSNP:rs2305479." evidence="4 5">
    <original>G</original>
    <variation>R</variation>
    <location>
        <position position="304"/>
    </location>
</feature>
<feature type="sequence variant" id="VAR_042636" description="In dbSNP:rs2305480." evidence="4 5">
    <original>P</original>
    <variation>S</variation>
    <location>
        <position position="311"/>
    </location>
</feature>
<feature type="sequence variant" id="VAR_042637" description="In dbSNP:rs16965388.">
    <original>R</original>
    <variation>C</variation>
    <location>
        <position position="330"/>
    </location>
</feature>
<feature type="mutagenesis site" description="Slightly decreased formation of pore." evidence="17">
    <original>RIVVK</original>
    <variation>AIVVA</variation>
    <location>
        <begin position="10"/>
        <end position="14"/>
    </location>
</feature>
<feature type="mutagenesis site" description="Decreased ability to trigger pyroptosis. Abolished ubiquitination by S.flexneri IpaH7.8." evidence="17 20">
    <original>E</original>
    <variation>K</variation>
    <location>
        <position position="15"/>
    </location>
</feature>
<feature type="mutagenesis site" description="Abolished ubiquitination by S.flexneri IpaH7.8." evidence="20">
    <original>DAGGD</original>
    <variation>AAGGA</variation>
    <location>
        <begin position="17"/>
        <end position="21"/>
    </location>
</feature>
<feature type="mutagenesis site" description="Decreased interaction with S.flexneri IpaH7.8. Does not affect ability to trigger pyroptosis." evidence="17">
    <original>D</original>
    <variation>A</variation>
    <location>
        <position position="17"/>
    </location>
</feature>
<feature type="mutagenesis site" description="Decreased interaction with S.flexneri IpaH7.8." evidence="17">
    <original>D</original>
    <variation>A</variation>
    <location>
        <position position="21"/>
    </location>
</feature>
<feature type="mutagenesis site" description="Reduced ability to trigger pyroptosis; when associated with A-51." evidence="17">
    <original>R</original>
    <variation>A</variation>
    <location>
        <position position="26"/>
    </location>
</feature>
<feature type="mutagenesis site" description="Decreased ability to trigger pyroptosis." evidence="17">
    <original>K</original>
    <variation>A</variation>
    <variation>E</variation>
    <location>
        <position position="43"/>
    </location>
</feature>
<feature type="mutagenesis site" description="Decreased ability to trigger pyroptosis." evidence="17">
    <original>R</original>
    <variation>A</variation>
    <variation>E</variation>
    <location>
        <position position="44"/>
    </location>
</feature>
<feature type="mutagenesis site" description="Decreased ability to trigger pyroptosis." evidence="17">
    <original>R</original>
    <variation>A</variation>
    <variation>E</variation>
    <location>
        <position position="50"/>
    </location>
</feature>
<feature type="mutagenesis site" description="Reduced ability to trigger pyroptosis; when associated with A-26." evidence="17">
    <original>H</original>
    <variation>A</variation>
    <location>
        <position position="51"/>
    </location>
</feature>
<feature type="mutagenesis site" description="Abolished ability to mediate pyroptosis." evidence="18">
    <original>H</original>
    <variation>N</variation>
    <location>
        <position position="51"/>
    </location>
</feature>
<feature type="mutagenesis site" description="Decreased interaction with S.flexneri IpaH7.8." evidence="17">
    <original>L</original>
    <variation>D</variation>
    <location>
        <position position="96"/>
    </location>
</feature>
<feature type="mutagenesis site" description="Decreased interaction with S.flexneri IpaH7.8. Does not affect ability to trigger pyroptosis." evidence="17">
    <original>I</original>
    <variation>D</variation>
    <location>
        <position position="97"/>
    </location>
</feature>
<feature type="mutagenesis site" description="Decreased interaction with S.flexneri IpaH7.8. Abolished ubiquitination by S.flexneri IpaH7.8; when associated with A-208." evidence="17 20">
    <original>R</original>
    <variation>A</variation>
    <location>
        <position position="124"/>
    </location>
</feature>
<feature type="mutagenesis site" description="Decreased ability to trigger pyroptosis." evidence="17">
    <original>K</original>
    <variation>A</variation>
    <variation>E</variation>
    <location>
        <position position="171"/>
    </location>
</feature>
<feature type="mutagenesis site" description="Decreased ability to trigger pyroptosis." evidence="17">
    <original>R</original>
    <variation>A</variation>
    <variation>E</variation>
    <location>
        <position position="174"/>
    </location>
</feature>
<feature type="mutagenesis site" description="Decreased interaction with S.flexneri IpaH7.8. Abolished ubiquitination by S.flexneri IpaH7.8; when associated with A-124." evidence="17 20">
    <original>R</original>
    <variation>A</variation>
    <location>
        <position position="208"/>
    </location>
</feature>
<feature type="mutagenesis site" description="Abolished ability to mediate pyroptosis." evidence="18">
    <original>L</original>
    <variation>P</variation>
    <location>
        <position position="212"/>
    </location>
</feature>
<feature type="mutagenesis site" description="Reduced ability to trigger pyroptosis." evidence="18">
    <original>R</original>
    <variation>A</variation>
    <location>
        <position position="225"/>
    </location>
</feature>
<feature type="mutagenesis site" description="Reduced ability to trigger pyroptosis." evidence="18">
    <original>K</original>
    <variation>A</variation>
    <location>
        <position position="227"/>
    </location>
</feature>
<feature type="mutagenesis site" description="Does not prevent cleavage by granzyme A (GZMA). Reduced ability to trigger pyroptosis." evidence="13 18">
    <original>K</original>
    <variation>A</variation>
    <location>
        <position position="229"/>
    </location>
</feature>
<feature type="mutagenesis site" description="Reduced ability to trigger pyroptosis." evidence="18">
    <original>E</original>
    <variation>A</variation>
    <location>
        <position position="233"/>
    </location>
</feature>
<feature type="mutagenesis site" description="Abolished cleavage by granzyme A (GZMA), preventing release of the N-terminal moiety (Gasdermin-B, N-terminal) and ability to induce pyroptosis in target cells of cytotoxic T-cells and natural killer (NK) cells." evidence="13">
    <original>K</original>
    <variation>A</variation>
    <location>
        <position position="244"/>
    </location>
</feature>
<feature type="mutagenesis site" description="Does not relieve autoinhibition. Relieves autoinhibition; when associated with D-399." evidence="20">
    <original>M</original>
    <variation>D</variation>
    <location>
        <position position="254"/>
    </location>
</feature>
<feature type="mutagenesis site" description="Does not relieve autoinhibition." evidence="20">
    <original>DALLE</original>
    <variation>AALLA</variation>
    <location>
        <begin position="339"/>
        <end position="343"/>
    </location>
</feature>
<feature type="mutagenesis site" description="Relieves autoinhibition." evidence="20">
    <original>DALLE</original>
    <variation>ADLLA</variation>
    <location>
        <begin position="339"/>
        <end position="343"/>
    </location>
</feature>
<feature type="mutagenesis site" description="Does not relieve autoinhibition." evidence="20">
    <original>D</original>
    <variation>A</variation>
    <location>
        <position position="339"/>
    </location>
</feature>
<feature type="mutagenesis site" description="Does not relieve autoinhibition." evidence="20">
    <original>A</original>
    <variation>D</variation>
    <location>
        <position position="340"/>
    </location>
</feature>
<feature type="mutagenesis site" description="Does not relieve autoinhibition." evidence="20">
    <original>V</original>
    <variation>D</variation>
    <location>
        <position position="370"/>
    </location>
</feature>
<feature type="mutagenesis site" description="Relieves autoinhibition." evidence="20">
    <original>LCALYV</original>
    <variation>DCALYD</variation>
    <location>
        <begin position="394"/>
        <end position="399"/>
    </location>
</feature>
<feature type="mutagenesis site" description="Does not relieve autoinhibition." evidence="20">
    <original>L</original>
    <variation>D</variation>
    <location>
        <position position="394"/>
    </location>
</feature>
<feature type="mutagenesis site" description="Does not relieve autoinhibition. Relieves autoinhibition; when associated with 339-A--A-343." evidence="20">
    <original>V</original>
    <variation>D</variation>
    <location>
        <position position="399"/>
    </location>
</feature>
<feature type="sequence conflict" description="In Ref. 1; AAF69638." evidence="30" ref="1">
    <original>D</original>
    <variation>H</variation>
    <location>
        <position position="65"/>
    </location>
</feature>
<feature type="helix" evidence="46">
    <location>
        <begin position="4"/>
        <end position="17"/>
    </location>
</feature>
<feature type="helix" evidence="47">
    <location>
        <begin position="28"/>
        <end position="30"/>
    </location>
</feature>
<feature type="helix" evidence="46">
    <location>
        <begin position="31"/>
        <end position="33"/>
    </location>
</feature>
<feature type="strand" evidence="46">
    <location>
        <begin position="38"/>
        <end position="45"/>
    </location>
</feature>
<feature type="strand" evidence="46">
    <location>
        <begin position="48"/>
        <end position="57"/>
    </location>
</feature>
<feature type="helix" evidence="46">
    <location>
        <begin position="58"/>
        <end position="61"/>
    </location>
</feature>
<feature type="helix" evidence="46">
    <location>
        <begin position="77"/>
        <end position="88"/>
    </location>
</feature>
<feature type="strand" evidence="46">
    <location>
        <begin position="89"/>
        <end position="99"/>
    </location>
</feature>
<feature type="strand" evidence="46">
    <location>
        <begin position="104"/>
        <end position="106"/>
    </location>
</feature>
<feature type="strand" evidence="46">
    <location>
        <begin position="117"/>
        <end position="125"/>
    </location>
</feature>
<feature type="helix" evidence="46">
    <location>
        <begin position="127"/>
        <end position="131"/>
    </location>
</feature>
<feature type="turn" evidence="46">
    <location>
        <begin position="132"/>
        <end position="135"/>
    </location>
</feature>
<feature type="helix" evidence="46">
    <location>
        <begin position="144"/>
        <end position="147"/>
    </location>
</feature>
<feature type="helix" evidence="46">
    <location>
        <begin position="152"/>
        <end position="154"/>
    </location>
</feature>
<feature type="strand" evidence="46">
    <location>
        <begin position="155"/>
        <end position="166"/>
    </location>
</feature>
<feature type="strand" evidence="46">
    <location>
        <begin position="168"/>
        <end position="172"/>
    </location>
</feature>
<feature type="helix" evidence="47">
    <location>
        <begin position="177"/>
        <end position="179"/>
    </location>
</feature>
<feature type="strand" evidence="46">
    <location>
        <begin position="195"/>
        <end position="199"/>
    </location>
</feature>
<feature type="strand" evidence="46">
    <location>
        <begin position="204"/>
        <end position="212"/>
    </location>
</feature>
<feature type="helix" evidence="44">
    <location>
        <begin position="216"/>
        <end position="220"/>
    </location>
</feature>
<feature type="strand" evidence="44">
    <location>
        <begin position="223"/>
        <end position="225"/>
    </location>
</feature>
<feature type="turn" evidence="45">
    <location>
        <begin position="231"/>
        <end position="233"/>
    </location>
</feature>
<feature type="helix" evidence="44">
    <location>
        <begin position="254"/>
        <end position="266"/>
    </location>
</feature>
<feature type="helix" evidence="44">
    <location>
        <begin position="270"/>
        <end position="281"/>
    </location>
</feature>
<feature type="turn" evidence="44">
    <location>
        <begin position="282"/>
        <end position="285"/>
    </location>
</feature>
<feature type="helix" evidence="44">
    <location>
        <begin position="287"/>
        <end position="303"/>
    </location>
</feature>
<feature type="helix" evidence="44">
    <location>
        <begin position="308"/>
        <end position="310"/>
    </location>
</feature>
<feature type="helix" evidence="44">
    <location>
        <begin position="314"/>
        <end position="318"/>
    </location>
</feature>
<feature type="helix" evidence="44">
    <location>
        <begin position="328"/>
        <end position="342"/>
    </location>
</feature>
<feature type="helix" evidence="44">
    <location>
        <begin position="347"/>
        <end position="357"/>
    </location>
</feature>
<feature type="helix" evidence="44">
    <location>
        <begin position="360"/>
        <end position="370"/>
    </location>
</feature>
<feature type="strand" evidence="44">
    <location>
        <begin position="371"/>
        <end position="373"/>
    </location>
</feature>
<feature type="strand" evidence="47">
    <location>
        <begin position="375"/>
        <end position="377"/>
    </location>
</feature>
<feature type="helix" evidence="47">
    <location>
        <begin position="378"/>
        <end position="380"/>
    </location>
</feature>
<feature type="helix" evidence="44">
    <location>
        <begin position="389"/>
        <end position="409"/>
    </location>
</feature>
<feature type="cross-link" description="(Microbial infection) Glycyl lysine isopeptide (Lys-Gly) (interchain with G-Cter in ubiquitin)" evidence="14">
    <location sequence="Q8TAX9-1">
        <position position="166"/>
    </location>
</feature>
<feature type="cross-link" description="(Microbial infection) Glycyl lysine isopeptide (Lys-Gly) (interchain with G-Cter in ubiquitin)" evidence="14">
    <location sequence="Q8TAX9-1">
        <position position="308"/>
    </location>
</feature>
<feature type="mutagenesis site" description="Does not abolish ubiquitination by S.flexneri IpaH7.8; when associated with R-308." evidence="14">
    <original>K</original>
    <variation>R</variation>
    <location sequence="Q8TAX9-1">
        <position position="166"/>
    </location>
</feature>
<feature type="mutagenesis site" description="Does not abolish ubiquitination by S.flexneri IpaH7.8; when associated with R-166." evidence="14">
    <original>K</original>
    <variation>R</variation>
    <location sequence="Q8TAX9-1">
        <position position="308"/>
    </location>
</feature>
<protein>
    <recommendedName>
        <fullName evidence="30">Gasdermin-B</fullName>
    </recommendedName>
    <alternativeName>
        <fullName evidence="24">Gasdermin-like protein</fullName>
    </alternativeName>
    <component>
        <recommendedName>
            <fullName evidence="30">Gasdermin-B, N-terminal</fullName>
            <shortName evidence="30">GSDMB-NT</shortName>
            <shortName evidence="26">p30</shortName>
        </recommendedName>
    </component>
    <component>
        <recommendedName>
            <fullName evidence="30">Gasdermin-B, C-terminal</fullName>
            <shortName evidence="30">GSDMB-CT</shortName>
            <shortName evidence="26">p16</shortName>
        </recommendedName>
    </component>
</protein>
<accession>Q8TAX9</accession>
<accession>B4DKK7</accession>
<accession>Q7Z377</accession>
<accession>Q8WY76</accession>
<accession>Q9NX71</accession>
<accession>Q9P163</accession>
<sequence length="416" mass="47348">MFSVFEEITRIVVKEMDAGGDMIAVRSLVDADRFRCFHLVGEKRTFFGCRHYTTGLTLMDILDTDGDKWLDELDSGLQGQKAEFQILDNVDSTGELIVRLPKEITISGSFQGFHHQKIKISENRISQQYLATLENRKLKRELPFSFRSINTRENLYLVTETLETVKEETLKSDRQYKFWSQISQGHLSYKHKGQREVTIPPNRVLSYRVKQLVFPNKETMNIHFRGKTKSFPEEKDGASSCLGKSLGSEDSRNMKEKLEDMESVLKDLTEEKRKDVLNSLAKCLGKEDIRQDLEQRVSEVLISGELHMEDPDKPLLSSLFNAAGVLVEARAKAILDFLDALLELSEEQQFVAEALEKGTLPLLKDQVKSVMEQNWDELASSPPDMDYDPEARILCALYVVVSILLELAEGPTSVSS</sequence>
<keyword id="KW-0002">3D-structure</keyword>
<keyword id="KW-0025">Alternative splicing</keyword>
<keyword id="KW-1003">Cell membrane</keyword>
<keyword id="KW-0175">Coiled coil</keyword>
<keyword id="KW-0204">Cytolysis</keyword>
<keyword id="KW-0963">Cytoplasm</keyword>
<keyword id="KW-0903">Direct protein sequencing</keyword>
<keyword id="KW-1017">Isopeptide bond</keyword>
<keyword id="KW-0449">Lipoprotein</keyword>
<keyword id="KW-0472">Membrane</keyword>
<keyword id="KW-1210">Necrosis</keyword>
<keyword id="KW-0564">Palmitate</keyword>
<keyword id="KW-1267">Proteomics identification</keyword>
<keyword id="KW-1185">Reference proteome</keyword>
<keyword id="KW-0812">Transmembrane</keyword>
<keyword id="KW-1134">Transmembrane beta strand</keyword>
<keyword id="KW-0832">Ubl conjugation</keyword>
<reference key="1">
    <citation type="journal article" date="2001" name="Genome Res.">
        <title>Gene expression profiling in human fetal liver and identification of tissue- and developmental-stage-specific genes through compiled expression profiles and efficient cloning of full-length cDNAs.</title>
        <authorList>
            <person name="Yu Y."/>
            <person name="Zhang C."/>
            <person name="Zhou G."/>
            <person name="Wu S."/>
            <person name="Qu X."/>
            <person name="Wei H."/>
            <person name="Xing G."/>
            <person name="Dong C."/>
            <person name="Zhai Y."/>
            <person name="Wan J."/>
            <person name="Ouyang S."/>
            <person name="Li L."/>
            <person name="Zhang S."/>
            <person name="Zhou K."/>
            <person name="Zhang Y."/>
            <person name="Wu C."/>
            <person name="He F."/>
        </authorList>
    </citation>
    <scope>NUCLEOTIDE SEQUENCE [LARGE SCALE MRNA] (ISOFORM 2)</scope>
    <source>
        <tissue>Fetal liver</tissue>
    </source>
</reference>
<reference key="2">
    <citation type="journal article" date="2004" name="Nat. Genet.">
        <title>Complete sequencing and characterization of 21,243 full-length human cDNAs.</title>
        <authorList>
            <person name="Ota T."/>
            <person name="Suzuki Y."/>
            <person name="Nishikawa T."/>
            <person name="Otsuki T."/>
            <person name="Sugiyama T."/>
            <person name="Irie R."/>
            <person name="Wakamatsu A."/>
            <person name="Hayashi K."/>
            <person name="Sato H."/>
            <person name="Nagai K."/>
            <person name="Kimura K."/>
            <person name="Makita H."/>
            <person name="Sekine M."/>
            <person name="Obayashi M."/>
            <person name="Nishi T."/>
            <person name="Shibahara T."/>
            <person name="Tanaka T."/>
            <person name="Ishii S."/>
            <person name="Yamamoto J."/>
            <person name="Saito K."/>
            <person name="Kawai Y."/>
            <person name="Isono Y."/>
            <person name="Nakamura Y."/>
            <person name="Nagahari K."/>
            <person name="Murakami K."/>
            <person name="Yasuda T."/>
            <person name="Iwayanagi T."/>
            <person name="Wagatsuma M."/>
            <person name="Shiratori A."/>
            <person name="Sudo H."/>
            <person name="Hosoiri T."/>
            <person name="Kaku Y."/>
            <person name="Kodaira H."/>
            <person name="Kondo H."/>
            <person name="Sugawara M."/>
            <person name="Takahashi M."/>
            <person name="Kanda K."/>
            <person name="Yokoi T."/>
            <person name="Furuya T."/>
            <person name="Kikkawa E."/>
            <person name="Omura Y."/>
            <person name="Abe K."/>
            <person name="Kamihara K."/>
            <person name="Katsuta N."/>
            <person name="Sato K."/>
            <person name="Tanikawa M."/>
            <person name="Yamazaki M."/>
            <person name="Ninomiya K."/>
            <person name="Ishibashi T."/>
            <person name="Yamashita H."/>
            <person name="Murakawa K."/>
            <person name="Fujimori K."/>
            <person name="Tanai H."/>
            <person name="Kimata M."/>
            <person name="Watanabe M."/>
            <person name="Hiraoka S."/>
            <person name="Chiba Y."/>
            <person name="Ishida S."/>
            <person name="Ono Y."/>
            <person name="Takiguchi S."/>
            <person name="Watanabe S."/>
            <person name="Yosida M."/>
            <person name="Hotuta T."/>
            <person name="Kusano J."/>
            <person name="Kanehori K."/>
            <person name="Takahashi-Fujii A."/>
            <person name="Hara H."/>
            <person name="Tanase T.-O."/>
            <person name="Nomura Y."/>
            <person name="Togiya S."/>
            <person name="Komai F."/>
            <person name="Hara R."/>
            <person name="Takeuchi K."/>
            <person name="Arita M."/>
            <person name="Imose N."/>
            <person name="Musashino K."/>
            <person name="Yuuki H."/>
            <person name="Oshima A."/>
            <person name="Sasaki N."/>
            <person name="Aotsuka S."/>
            <person name="Yoshikawa Y."/>
            <person name="Matsunawa H."/>
            <person name="Ichihara T."/>
            <person name="Shiohata N."/>
            <person name="Sano S."/>
            <person name="Moriya S."/>
            <person name="Momiyama H."/>
            <person name="Satoh N."/>
            <person name="Takami S."/>
            <person name="Terashima Y."/>
            <person name="Suzuki O."/>
            <person name="Nakagawa S."/>
            <person name="Senoh A."/>
            <person name="Mizoguchi H."/>
            <person name="Goto Y."/>
            <person name="Shimizu F."/>
            <person name="Wakebe H."/>
            <person name="Hishigaki H."/>
            <person name="Watanabe T."/>
            <person name="Sugiyama A."/>
            <person name="Takemoto M."/>
            <person name="Kawakami B."/>
            <person name="Yamazaki M."/>
            <person name="Watanabe K."/>
            <person name="Kumagai A."/>
            <person name="Itakura S."/>
            <person name="Fukuzumi Y."/>
            <person name="Fujimori Y."/>
            <person name="Komiyama M."/>
            <person name="Tashiro H."/>
            <person name="Tanigami A."/>
            <person name="Fujiwara T."/>
            <person name="Ono T."/>
            <person name="Yamada K."/>
            <person name="Fujii Y."/>
            <person name="Ozaki K."/>
            <person name="Hirao M."/>
            <person name="Ohmori Y."/>
            <person name="Kawabata A."/>
            <person name="Hikiji T."/>
            <person name="Kobatake N."/>
            <person name="Inagaki H."/>
            <person name="Ikema Y."/>
            <person name="Okamoto S."/>
            <person name="Okitani R."/>
            <person name="Kawakami T."/>
            <person name="Noguchi S."/>
            <person name="Itoh T."/>
            <person name="Shigeta K."/>
            <person name="Senba T."/>
            <person name="Matsumura K."/>
            <person name="Nakajima Y."/>
            <person name="Mizuno T."/>
            <person name="Morinaga M."/>
            <person name="Sasaki M."/>
            <person name="Togashi T."/>
            <person name="Oyama M."/>
            <person name="Hata H."/>
            <person name="Watanabe M."/>
            <person name="Komatsu T."/>
            <person name="Mizushima-Sugano J."/>
            <person name="Satoh T."/>
            <person name="Shirai Y."/>
            <person name="Takahashi Y."/>
            <person name="Nakagawa K."/>
            <person name="Okumura K."/>
            <person name="Nagase T."/>
            <person name="Nomura N."/>
            <person name="Kikuchi H."/>
            <person name="Masuho Y."/>
            <person name="Yamashita R."/>
            <person name="Nakai K."/>
            <person name="Yada T."/>
            <person name="Nakamura Y."/>
            <person name="Ohara O."/>
            <person name="Isogai T."/>
            <person name="Sugano S."/>
        </authorList>
    </citation>
    <scope>NUCLEOTIDE SEQUENCE [LARGE SCALE MRNA] (ISOFORMS 3 AND 6)</scope>
    <scope>VARIANTS ARG-304 AND SER-311</scope>
    <source>
        <tissue>Colon</tissue>
    </source>
</reference>
<reference key="3">
    <citation type="journal article" date="2004" name="Proc. Natl. Acad. Sci. U.S.A.">
        <title>Large-scale cDNA transfection screening for genes related to cancer development and progression.</title>
        <authorList>
            <person name="Wan D."/>
            <person name="Gong Y."/>
            <person name="Qin W."/>
            <person name="Zhang P."/>
            <person name="Li J."/>
            <person name="Wei L."/>
            <person name="Zhou X."/>
            <person name="Li H."/>
            <person name="Qiu X."/>
            <person name="Zhong F."/>
            <person name="He L."/>
            <person name="Yu J."/>
            <person name="Yao G."/>
            <person name="Jiang H."/>
            <person name="Qian L."/>
            <person name="Yu Y."/>
            <person name="Shu H."/>
            <person name="Chen X."/>
            <person name="Xu H."/>
            <person name="Guo M."/>
            <person name="Pan Z."/>
            <person name="Chen Y."/>
            <person name="Ge C."/>
            <person name="Yang S."/>
            <person name="Gu J."/>
        </authorList>
    </citation>
    <scope>NUCLEOTIDE SEQUENCE [LARGE SCALE MRNA] (ISOFORM 5)</scope>
</reference>
<reference key="4">
    <citation type="journal article" date="2006" name="Nature">
        <title>DNA sequence of human chromosome 17 and analysis of rearrangement in the human lineage.</title>
        <authorList>
            <person name="Zody M.C."/>
            <person name="Garber M."/>
            <person name="Adams D.J."/>
            <person name="Sharpe T."/>
            <person name="Harrow J."/>
            <person name="Lupski J.R."/>
            <person name="Nicholson C."/>
            <person name="Searle S.M."/>
            <person name="Wilming L."/>
            <person name="Young S.K."/>
            <person name="Abouelleil A."/>
            <person name="Allen N.R."/>
            <person name="Bi W."/>
            <person name="Bloom T."/>
            <person name="Borowsky M.L."/>
            <person name="Bugalter B.E."/>
            <person name="Butler J."/>
            <person name="Chang J.L."/>
            <person name="Chen C.-K."/>
            <person name="Cook A."/>
            <person name="Corum B."/>
            <person name="Cuomo C.A."/>
            <person name="de Jong P.J."/>
            <person name="DeCaprio D."/>
            <person name="Dewar K."/>
            <person name="FitzGerald M."/>
            <person name="Gilbert J."/>
            <person name="Gibson R."/>
            <person name="Gnerre S."/>
            <person name="Goldstein S."/>
            <person name="Grafham D.V."/>
            <person name="Grocock R."/>
            <person name="Hafez N."/>
            <person name="Hagopian D.S."/>
            <person name="Hart E."/>
            <person name="Norman C.H."/>
            <person name="Humphray S."/>
            <person name="Jaffe D.B."/>
            <person name="Jones M."/>
            <person name="Kamal M."/>
            <person name="Khodiyar V.K."/>
            <person name="LaButti K."/>
            <person name="Laird G."/>
            <person name="Lehoczky J."/>
            <person name="Liu X."/>
            <person name="Lokyitsang T."/>
            <person name="Loveland J."/>
            <person name="Lui A."/>
            <person name="Macdonald P."/>
            <person name="Major J.E."/>
            <person name="Matthews L."/>
            <person name="Mauceli E."/>
            <person name="McCarroll S.A."/>
            <person name="Mihalev A.H."/>
            <person name="Mudge J."/>
            <person name="Nguyen C."/>
            <person name="Nicol R."/>
            <person name="O'Leary S.B."/>
            <person name="Osoegawa K."/>
            <person name="Schwartz D.C."/>
            <person name="Shaw-Smith C."/>
            <person name="Stankiewicz P."/>
            <person name="Steward C."/>
            <person name="Swarbreck D."/>
            <person name="Venkataraman V."/>
            <person name="Whittaker C.A."/>
            <person name="Yang X."/>
            <person name="Zimmer A.R."/>
            <person name="Bradley A."/>
            <person name="Hubbard T."/>
            <person name="Birren B.W."/>
            <person name="Rogers J."/>
            <person name="Lander E.S."/>
            <person name="Nusbaum C."/>
        </authorList>
    </citation>
    <scope>NUCLEOTIDE SEQUENCE [LARGE SCALE GENOMIC DNA]</scope>
</reference>
<reference key="5">
    <citation type="submission" date="2005-07" db="EMBL/GenBank/DDBJ databases">
        <authorList>
            <person name="Mural R.J."/>
            <person name="Istrail S."/>
            <person name="Sutton G."/>
            <person name="Florea L."/>
            <person name="Halpern A.L."/>
            <person name="Mobarry C.M."/>
            <person name="Lippert R."/>
            <person name="Walenz B."/>
            <person name="Shatkay H."/>
            <person name="Dew I."/>
            <person name="Miller J.R."/>
            <person name="Flanigan M.J."/>
            <person name="Edwards N.J."/>
            <person name="Bolanos R."/>
            <person name="Fasulo D."/>
            <person name="Halldorsson B.V."/>
            <person name="Hannenhalli S."/>
            <person name="Turner R."/>
            <person name="Yooseph S."/>
            <person name="Lu F."/>
            <person name="Nusskern D.R."/>
            <person name="Shue B.C."/>
            <person name="Zheng X.H."/>
            <person name="Zhong F."/>
            <person name="Delcher A.L."/>
            <person name="Huson D.H."/>
            <person name="Kravitz S.A."/>
            <person name="Mouchard L."/>
            <person name="Reinert K."/>
            <person name="Remington K.A."/>
            <person name="Clark A.G."/>
            <person name="Waterman M.S."/>
            <person name="Eichler E.E."/>
            <person name="Adams M.D."/>
            <person name="Hunkapiller M.W."/>
            <person name="Myers E.W."/>
            <person name="Venter J.C."/>
        </authorList>
    </citation>
    <scope>NUCLEOTIDE SEQUENCE [LARGE SCALE GENOMIC DNA]</scope>
</reference>
<reference key="6">
    <citation type="journal article" date="2004" name="Genome Res.">
        <title>The status, quality, and expansion of the NIH full-length cDNA project: the Mammalian Gene Collection (MGC).</title>
        <authorList>
            <consortium name="The MGC Project Team"/>
        </authorList>
    </citation>
    <scope>NUCLEOTIDE SEQUENCE [LARGE SCALE MRNA] (ISOFORM 1)</scope>
    <scope>VARIANTS ARG-304 AND SER-311</scope>
    <source>
        <tissue>Lung</tissue>
    </source>
</reference>
<reference key="7">
    <citation type="journal article" date="2007" name="BMC Genomics">
        <title>The full-ORF clone resource of the German cDNA consortium.</title>
        <authorList>
            <person name="Bechtel S."/>
            <person name="Rosenfelder H."/>
            <person name="Duda A."/>
            <person name="Schmidt C.P."/>
            <person name="Ernst U."/>
            <person name="Wellenreuther R."/>
            <person name="Mehrle A."/>
            <person name="Schuster C."/>
            <person name="Bahr A."/>
            <person name="Bloecker H."/>
            <person name="Heubner D."/>
            <person name="Hoerlein A."/>
            <person name="Michel G."/>
            <person name="Wedler H."/>
            <person name="Koehrer K."/>
            <person name="Ottenwaelder B."/>
            <person name="Poustka A."/>
            <person name="Wiemann S."/>
            <person name="Schupp I."/>
        </authorList>
    </citation>
    <scope>NUCLEOTIDE SEQUENCE [LARGE SCALE MRNA] OF 70-411 (ISOFORM 4)</scope>
    <source>
        <tissue>Rectum tumor</tissue>
    </source>
</reference>
<reference key="8">
    <citation type="journal article" date="2020" name="Science">
        <title>Granzyme A from cytotoxic lymphocytes cleaves GSDMB to trigger pyroptosis in target cells.</title>
        <authorList>
            <person name="Zhou Z."/>
            <person name="He H."/>
            <person name="Wang K."/>
            <person name="Shi X."/>
            <person name="Wang Y."/>
            <person name="Su Y."/>
            <person name="Wang Y."/>
            <person name="Li D."/>
            <person name="Liu W."/>
            <person name="Zhang Y."/>
            <person name="Shen L."/>
            <person name="Han W."/>
            <person name="Shen L."/>
            <person name="Ding J."/>
            <person name="Shao F."/>
        </authorList>
    </citation>
    <scope>PARTIAL PROTEIN SEQUENCE</scope>
    <scope>FUNCTION</scope>
    <scope>PROTEOLYTIC CLEAVAGE</scope>
    <scope>INDUCTION</scope>
    <scope>MUTAGENESIS OF LYS-229 AND LYS-244</scope>
</reference>
<reference key="9">
    <citation type="journal article" date="2006" name="Arch. Virol.">
        <title>Transcriptional control of the HERV-H LTR element of the GSDML gene in human tissues and cancer cells.</title>
        <authorList>
            <person name="Sin H.-S."/>
            <person name="Huh J.-W."/>
            <person name="Kim D.-S."/>
            <person name="Kang D.W."/>
            <person name="Min D.S."/>
            <person name="Kim T.-H."/>
            <person name="Ha H.-S."/>
            <person name="Kim H.-H."/>
            <person name="Lee S.-Y."/>
            <person name="Kim H.-S."/>
        </authorList>
    </citation>
    <scope>ALTERNATIVE PROMOTER USAGE</scope>
</reference>
<reference key="10">
    <citation type="journal article" date="2007" name="Cancer Sci.">
        <title>Identification of a predictive gene expression signature of cervical lymph node metastasis in oral squamous cell carcinoma.</title>
        <authorList>
            <person name="Nguyen S.T."/>
            <person name="Hasegawa S."/>
            <person name="Tsuda H."/>
            <person name="Tomioka H."/>
            <person name="Ushijima M."/>
            <person name="Noda M."/>
            <person name="Omura K."/>
            <person name="Miki Y."/>
        </authorList>
    </citation>
    <scope>MARKER OF CERVICAL LYMPH NODE METASTASIS</scope>
</reference>
<reference key="11">
    <citation type="journal article" date="2007" name="Genomics">
        <title>Members of a novel gene family, Gsdm, are expressed exclusively in the epithelium of the skin and gastrointestinal tract in a highly tissue-specific manner.</title>
        <authorList>
            <person name="Tamura M."/>
            <person name="Tanaka S."/>
            <person name="Fujii T."/>
            <person name="Aoki A."/>
            <person name="Komiyama H."/>
            <person name="Ezawa K."/>
            <person name="Sumiyama K."/>
            <person name="Sagai T."/>
            <person name="Shiroishi T."/>
        </authorList>
    </citation>
    <scope>GENE FAMILY</scope>
</reference>
<reference key="12">
    <citation type="journal article" date="2008" name="Pathology">
        <title>Differential expression and localisation of gasdermin-like (GSDML), a novel member of the cancer-associated GSDMDC protein family, in neoplastic and non-neoplastic gastric, hepatic, and colon tissues.</title>
        <authorList>
            <person name="Carl-McGrath S."/>
            <person name="Schneider-Stock R."/>
            <person name="Ebert M."/>
            <person name="Roecken C."/>
        </authorList>
    </citation>
    <scope>ALTERNATIVE SPLICING</scope>
    <scope>SUBCELLULAR LOCATION</scope>
</reference>
<reference key="13">
    <citation type="journal article" date="2009" name="Genes Chromosomes Cancer">
        <title>Distinctive expression and function of four GSDM family genes (GSDMA-D) in normal and malignant upper gastrointestinal epithelium.</title>
        <authorList>
            <person name="Saeki N."/>
            <person name="Usui T."/>
            <person name="Aoyagi K."/>
            <person name="Kim D.H."/>
            <person name="Sato M."/>
            <person name="Mabuchi T."/>
            <person name="Yanagihara K."/>
            <person name="Ogawa K."/>
            <person name="Sakamoto H."/>
            <person name="Yoshida T."/>
            <person name="Sasaki H."/>
        </authorList>
    </citation>
    <scope>TISSUE SPECIFICITY</scope>
</reference>
<reference key="14">
    <citation type="journal article" date="2016" name="Nature">
        <title>Pore-forming activity and structural autoinhibition of the gasdermin family.</title>
        <authorList>
            <person name="Ding J."/>
            <person name="Wang K."/>
            <person name="Liu W."/>
            <person name="She Y."/>
            <person name="Sun Q."/>
            <person name="Shi J."/>
            <person name="Sun H."/>
            <person name="Wang D.C."/>
            <person name="Shao F."/>
        </authorList>
    </citation>
    <scope>FUNCTION</scope>
</reference>
<reference key="15">
    <citation type="journal article" date="2021" name="Cell">
        <title>Pathogenic ubiquitination of GSDMB inhibits NK cell bactericidal functions.</title>
        <authorList>
            <person name="Hansen J.M."/>
            <person name="de Jong M.F."/>
            <person name="Wu Q."/>
            <person name="Zhang L.S."/>
            <person name="Heisler D.B."/>
            <person name="Alto L.T."/>
            <person name="Alto N.M."/>
        </authorList>
    </citation>
    <scope>FUNCTION (ISOFORM 1)</scope>
    <scope>PROTEOLYTIC CLEAVAGE</scope>
    <scope>UBIQUITINATION AT LYS-166 AND LYS-308 (ISOFORM 1)</scope>
    <scope>UBIQUITINATION (MICROBIAL INFECTION)</scope>
    <scope>MUTAGENESIS OF LYS-166 AND LYS-308 (ISOFORM 1)</scope>
</reference>
<reference key="16">
    <citation type="journal article" date="2022" name="Cell">
        <title>GSDMB is increased in IBD and regulates epithelial restitution/repair independent of pyroptosis.</title>
        <authorList>
            <person name="Rana N."/>
            <person name="Privitera G."/>
            <person name="Kondolf H.C."/>
            <person name="Bulek K."/>
            <person name="Lechuga S."/>
            <person name="De Salvo C."/>
            <person name="Corridoni D."/>
            <person name="Antanaviciute A."/>
            <person name="Maywald R.L."/>
            <person name="Hurtado A.M."/>
            <person name="Zhao J."/>
            <person name="Huang E.H."/>
            <person name="Li X."/>
            <person name="Chan E.R."/>
            <person name="Simmons A."/>
            <person name="Bamias G."/>
            <person name="Abbott D.W."/>
            <person name="Heaney J.D."/>
            <person name="Ivanov A.I."/>
            <person name="Pizarro T.T."/>
        </authorList>
    </citation>
    <scope>FUNCTION</scope>
    <scope>INDUCTION</scope>
</reference>
<reference key="17">
    <citation type="journal article" date="2022" name="Genes Dis.">
        <title>GSDMB N-terminal assembles in plasma membrane to execute pyroptotic cell death.</title>
        <authorList>
            <person name="Gong W."/>
            <person name="Liu P."/>
            <person name="Liu J."/>
            <person name="Li Y."/>
            <person name="Zheng T."/>
            <person name="Wu X."/>
            <person name="Zhao Y."/>
            <person name="Ren J."/>
        </authorList>
    </citation>
    <scope>FUNCTION (ISOFORM 4)</scope>
    <scope>SUBCELLULAR LOCATION</scope>
    <scope>PROTEOLYTIC CLEAVAGE</scope>
</reference>
<reference key="18">
    <citation type="journal article" date="2023" name="Cell Death Differ.">
        <title>Distinct GSDMB protein isoforms and protease cleavage processes differentially control pyroptotic cell death and mitochondrial damage in cancer cells.</title>
        <authorList>
            <person name="Oltra S.S."/>
            <person name="Colomo S."/>
            <person name="Sin L."/>
            <person name="Perez-Lopez M."/>
            <person name="Lazaro S."/>
            <person name="Molina-Crespo A."/>
            <person name="Choi K.H."/>
            <person name="Ros-Pardo D."/>
            <person name="Martinez L."/>
            <person name="Morales S."/>
            <person name="Gonzalez-Paramos C."/>
            <person name="Orantes A."/>
            <person name="Soriano M."/>
            <person name="Hernandez A."/>
            <person name="Lluch A."/>
            <person name="Rojo F."/>
            <person name="Albanell J."/>
            <person name="Gomez-Puertas P."/>
            <person name="Ko J.K."/>
            <person name="Sarrio D."/>
            <person name="Moreno-Bueno G."/>
        </authorList>
    </citation>
    <scope>FUNCTION (ISOFORMS 2; 3; 4 AND 6)</scope>
    <scope>SUBCELLULAR LOCATION</scope>
    <scope>PROTEOLYTIC CLEAVAGE</scope>
    <scope>MUTAGENESIS OF HIS-51; LEU-212; ARG-225; LYS-227; LYS-229 AND GLU-233</scope>
</reference>
<reference key="19">
    <citation type="journal article" date="2024" name="Nature">
        <title>ROS-dependent S-palmitoylation activates cleaved and intact gasdermin D.</title>
        <authorList>
            <person name="Du G."/>
            <person name="Healy L.B."/>
            <person name="David L."/>
            <person name="Walker C."/>
            <person name="El-Baba T.J."/>
            <person name="Lutomski C.A."/>
            <person name="Goh B."/>
            <person name="Gu B."/>
            <person name="Pi X."/>
            <person name="Devant P."/>
            <person name="Fontana P."/>
            <person name="Dong Y."/>
            <person name="Ma X."/>
            <person name="Miao R."/>
            <person name="Balasubramanian A."/>
            <person name="Puthenveetil R."/>
            <person name="Banerjee A."/>
            <person name="Luo H.R."/>
            <person name="Kagan J.C."/>
            <person name="Oh S.F."/>
            <person name="Robinson C.V."/>
            <person name="Lieberman J."/>
            <person name="Wu H."/>
        </authorList>
    </citation>
    <scope>PALMITOYLATION</scope>
</reference>
<reference evidence="35 36 37" key="20">
    <citation type="journal article" date="2017" name="Proc. Natl. Acad. Sci. U.S.A.">
        <title>Gene polymorphism linked to increased asthma and IBD risk alters gasdermin-B structure, a sulfatide and phosphoinositide binding protein.</title>
        <authorList>
            <person name="Chao K.L."/>
            <person name="Kulakova L."/>
            <person name="Herzberg O."/>
        </authorList>
    </citation>
    <scope>X-RAY CRYSTALLOGRAPHY (2.60 ANGSTROMS) OF 222-413</scope>
    <scope>PROTEOLYTIC CLEAVAGE</scope>
</reference>
<reference evidence="39 40 41" key="21">
    <citation type="journal article" date="2023" name="Nature">
        <title>Structural basis for GSDMB pore formation and its targeting by IpaH7.8.</title>
        <authorList>
            <person name="Wang C."/>
            <person name="Shivcharan S."/>
            <person name="Tian T."/>
            <person name="Wright S."/>
            <person name="Ma D."/>
            <person name="Chang J."/>
            <person name="Li K."/>
            <person name="Song K."/>
            <person name="Xu C."/>
            <person name="Rathinam V.A."/>
            <person name="Ruan J."/>
        </authorList>
    </citation>
    <scope>STRUCTURE BY ELECTRON MICROSCOPY (3.80 ANGSTROMS) IN COMPLEX WITH S.FLEXNERI IPAH7.8</scope>
    <scope>FUNCTION (ISOFORMS 2; 3; 4 AND 6)</scope>
    <scope>ACTIVITY REGULATION</scope>
    <scope>SUBUNIT</scope>
    <scope>UBIQUITINATION AT LYS-177; LYS-190 AND LYS-192 (MICROBIAL INFECTION)</scope>
</reference>
<reference evidence="42 43" key="22">
    <citation type="journal article" date="2023" name="Nature">
        <title>Structural mechanisms for regulation of GSDMB pore-forming activity.</title>
        <authorList>
            <person name="Zhong X."/>
            <person name="Zeng H."/>
            <person name="Zhou Z."/>
            <person name="Su Y."/>
            <person name="Cheng H."/>
            <person name="Hou Y."/>
            <person name="She Y."/>
            <person name="Feng N."/>
            <person name="Wang J."/>
            <person name="Shao F."/>
            <person name="Ding J."/>
        </authorList>
    </citation>
    <scope>X-RAY CRYSTALLOGRAPHY (2.70 ANGSTROMS) IN COMPLEX WITH S.FLEXNERI IPAH7.8</scope>
    <scope>FUNCTION (ISOFORMS 2; 3; 4 AND 6)</scope>
    <scope>SUBUNIT</scope>
    <scope>ACTIVITY REGULATION</scope>
    <scope>UBIQUITINATION (MICROBIAL INFECTION)</scope>
    <scope>MUTAGENESIS OF GLU-15; 17-ASP--ASP-21; ARG-124; ARG-208; MET-254; 339-ASP--GLU-343; ASP-339; ALA-340; VAL-370; 394-LEU--VAL-399; LEU-394 AND VAL-399</scope>
</reference>
<reference evidence="38" key="23">
    <citation type="journal article" date="2023" name="Nat. Commun.">
        <title>Insights into the GSDMB-mediated cellular lysis and its targeting by IpaH7.8.</title>
        <authorList>
            <person name="Yin H."/>
            <person name="Zheng J."/>
            <person name="He Q."/>
            <person name="Zhang X."/>
            <person name="Li X."/>
            <person name="Ma Y."/>
            <person name="Liang X."/>
            <person name="Gao J."/>
            <person name="Kocsis B.L."/>
            <person name="Li Z."/>
            <person name="Liu X."/>
            <person name="Alto N.M."/>
            <person name="Li L."/>
            <person name="Zhang H."/>
        </authorList>
    </citation>
    <scope>X-RAY CRYSTALLOGRAPHY (2.70 ANGSTROMS) OF 1-411 IN COMPLEX WITH S.FLEXNERI IPAH7.8</scope>
    <scope>FUNCTION</scope>
    <scope>SUBUNIT</scope>
    <scope>UBIQUITINATION (MICROBIAL INFECTION)</scope>
    <scope>MUTAGENESIS OF 10-ARG--LYS-14; GLU-15; ASP-17; ASP-21; ARG-26; LYS-43; ARG-44; ARG-50; HIS-51; LEU-96; ILE-97; ARG-124; LYS-171; ARG-174 AND ARG-208</scope>
</reference>
<reference key="24">
    <citation type="journal article" date="2006" name="Science">
        <title>The consensus coding sequences of human breast and colorectal cancers.</title>
        <authorList>
            <person name="Sjoeblom T."/>
            <person name="Jones S."/>
            <person name="Wood L.D."/>
            <person name="Parsons D.W."/>
            <person name="Lin J."/>
            <person name="Barber T.D."/>
            <person name="Mandelker D."/>
            <person name="Leary R.J."/>
            <person name="Ptak J."/>
            <person name="Silliman N."/>
            <person name="Szabo S."/>
            <person name="Buckhaults P."/>
            <person name="Farrell C."/>
            <person name="Meeh P."/>
            <person name="Markowitz S.D."/>
            <person name="Willis J."/>
            <person name="Dawson D."/>
            <person name="Willson J.K.V."/>
            <person name="Gazdar A.F."/>
            <person name="Hartigan J."/>
            <person name="Wu L."/>
            <person name="Liu C."/>
            <person name="Parmigiani G."/>
            <person name="Park B.H."/>
            <person name="Bachman K.E."/>
            <person name="Papadopoulos N."/>
            <person name="Vogelstein B."/>
            <person name="Kinzler K.W."/>
            <person name="Velculescu V.E."/>
        </authorList>
    </citation>
    <scope>VARIANT [LARGE SCALE ANALYSIS] GLY-250</scope>
</reference>
<evidence type="ECO:0000250" key="1">
    <source>
        <dbReference type="UniProtKB" id="Q5Y4Y6"/>
    </source>
</evidence>
<evidence type="ECO:0000255" key="2"/>
<evidence type="ECO:0000256" key="3">
    <source>
        <dbReference type="SAM" id="MobiDB-lite"/>
    </source>
</evidence>
<evidence type="ECO:0000269" key="4">
    <source>
    </source>
</evidence>
<evidence type="ECO:0000269" key="5">
    <source>
    </source>
</evidence>
<evidence type="ECO:0000269" key="6">
    <source>
    </source>
</evidence>
<evidence type="ECO:0000269" key="7">
    <source>
    </source>
</evidence>
<evidence type="ECO:0000269" key="8">
    <source>
    </source>
</evidence>
<evidence type="ECO:0000269" key="9">
    <source>
    </source>
</evidence>
<evidence type="ECO:0000269" key="10">
    <source>
    </source>
</evidence>
<evidence type="ECO:0000269" key="11">
    <source>
    </source>
</evidence>
<evidence type="ECO:0000269" key="12">
    <source>
    </source>
</evidence>
<evidence type="ECO:0000269" key="13">
    <source>
    </source>
</evidence>
<evidence type="ECO:0000269" key="14">
    <source>
    </source>
</evidence>
<evidence type="ECO:0000269" key="15">
    <source>
    </source>
</evidence>
<evidence type="ECO:0000269" key="16">
    <source>
    </source>
</evidence>
<evidence type="ECO:0000269" key="17">
    <source>
    </source>
</evidence>
<evidence type="ECO:0000269" key="18">
    <source>
    </source>
</evidence>
<evidence type="ECO:0000269" key="19">
    <source>
    </source>
</evidence>
<evidence type="ECO:0000269" key="20">
    <source>
    </source>
</evidence>
<evidence type="ECO:0000269" key="21">
    <source>
    </source>
</evidence>
<evidence type="ECO:0000303" key="22">
    <source>
    </source>
</evidence>
<evidence type="ECO:0000303" key="23">
    <source>
    </source>
</evidence>
<evidence type="ECO:0000303" key="24">
    <source>
    </source>
</evidence>
<evidence type="ECO:0000303" key="25">
    <source>
    </source>
</evidence>
<evidence type="ECO:0000303" key="26">
    <source>
    </source>
</evidence>
<evidence type="ECO:0000303" key="27">
    <source>
    </source>
</evidence>
<evidence type="ECO:0000303" key="28">
    <source>
    </source>
</evidence>
<evidence type="ECO:0000303" key="29">
    <source>
    </source>
</evidence>
<evidence type="ECO:0000305" key="30"/>
<evidence type="ECO:0000305" key="31">
    <source>
    </source>
</evidence>
<evidence type="ECO:0000305" key="32">
    <source>
    </source>
</evidence>
<evidence type="ECO:0000305" key="33">
    <source>
    </source>
</evidence>
<evidence type="ECO:0000312" key="34">
    <source>
        <dbReference type="HGNC" id="HGNC:23690"/>
    </source>
</evidence>
<evidence type="ECO:0007744" key="35">
    <source>
        <dbReference type="PDB" id="5TIB"/>
    </source>
</evidence>
<evidence type="ECO:0007744" key="36">
    <source>
        <dbReference type="PDB" id="5TJ2"/>
    </source>
</evidence>
<evidence type="ECO:0007744" key="37">
    <source>
        <dbReference type="PDB" id="5TJ4"/>
    </source>
</evidence>
<evidence type="ECO:0007744" key="38">
    <source>
        <dbReference type="PDB" id="7WJQ"/>
    </source>
</evidence>
<evidence type="ECO:0007744" key="39">
    <source>
        <dbReference type="PDB" id="8EFP"/>
    </source>
</evidence>
<evidence type="ECO:0007744" key="40">
    <source>
        <dbReference type="PDB" id="8ET1"/>
    </source>
</evidence>
<evidence type="ECO:0007744" key="41">
    <source>
        <dbReference type="PDB" id="8ET2"/>
    </source>
</evidence>
<evidence type="ECO:0007744" key="42">
    <source>
        <dbReference type="PDB" id="8GTJ"/>
    </source>
</evidence>
<evidence type="ECO:0007744" key="43">
    <source>
        <dbReference type="PDB" id="8GTN"/>
    </source>
</evidence>
<evidence type="ECO:0007829" key="44">
    <source>
        <dbReference type="PDB" id="5TIB"/>
    </source>
</evidence>
<evidence type="ECO:0007829" key="45">
    <source>
        <dbReference type="PDB" id="5TJ4"/>
    </source>
</evidence>
<evidence type="ECO:0007829" key="46">
    <source>
        <dbReference type="PDB" id="7WJQ"/>
    </source>
</evidence>
<evidence type="ECO:0007829" key="47">
    <source>
        <dbReference type="PDB" id="8GTJ"/>
    </source>
</evidence>
<gene>
    <name evidence="25 34" type="primary">GSDMB</name>
    <name evidence="24" type="synonym">GSDML</name>
    <name evidence="23" type="ORF">PP4052</name>
    <name evidence="22" type="ORF">PRO2521</name>
</gene>
<dbReference type="EMBL" id="AF119884">
    <property type="protein sequence ID" value="AAF69638.1"/>
    <property type="molecule type" value="mRNA"/>
</dbReference>
<dbReference type="EMBL" id="AK000409">
    <property type="protein sequence ID" value="BAA91146.1"/>
    <property type="molecule type" value="mRNA"/>
</dbReference>
<dbReference type="EMBL" id="AK296607">
    <property type="protein sequence ID" value="BAG59219.1"/>
    <property type="molecule type" value="mRNA"/>
</dbReference>
<dbReference type="EMBL" id="AF258572">
    <property type="protein sequence ID" value="AAG23775.1"/>
    <property type="molecule type" value="mRNA"/>
</dbReference>
<dbReference type="EMBL" id="AC090844">
    <property type="status" value="NOT_ANNOTATED_CDS"/>
    <property type="molecule type" value="Genomic_DNA"/>
</dbReference>
<dbReference type="EMBL" id="CH471152">
    <property type="protein sequence ID" value="EAW60614.1"/>
    <property type="molecule type" value="Genomic_DNA"/>
</dbReference>
<dbReference type="EMBL" id="BC025682">
    <property type="protein sequence ID" value="AAH25682.1"/>
    <property type="molecule type" value="mRNA"/>
</dbReference>
<dbReference type="EMBL" id="BX538068">
    <property type="protein sequence ID" value="CAD97998.1"/>
    <property type="molecule type" value="mRNA"/>
</dbReference>
<dbReference type="CCDS" id="CCDS11354.1">
    <molecule id="Q8TAX9-2"/>
</dbReference>
<dbReference type="CCDS" id="CCDS42313.1">
    <molecule id="Q8TAX9-3"/>
</dbReference>
<dbReference type="CCDS" id="CCDS54119.1">
    <molecule id="Q8TAX9-6"/>
</dbReference>
<dbReference type="CCDS" id="CCDS54120.1">
    <molecule id="Q8TAX9-4"/>
</dbReference>
<dbReference type="RefSeq" id="NP_001035936.1">
    <molecule id="Q8TAX9-3"/>
    <property type="nucleotide sequence ID" value="NM_001042471.2"/>
</dbReference>
<dbReference type="RefSeq" id="NP_001159430.1">
    <molecule id="Q8TAX9-4"/>
    <property type="nucleotide sequence ID" value="NM_001165958.2"/>
</dbReference>
<dbReference type="RefSeq" id="NP_001159431.1">
    <molecule id="Q8TAX9-6"/>
    <property type="nucleotide sequence ID" value="NM_001165959.2"/>
</dbReference>
<dbReference type="RefSeq" id="NP_001356331.1">
    <molecule id="Q8TAX9-3"/>
    <property type="nucleotide sequence ID" value="NM_001369402.2"/>
</dbReference>
<dbReference type="RefSeq" id="NP_001375349.1">
    <molecule id="Q8TAX9-4"/>
    <property type="nucleotide sequence ID" value="NM_001388420.1"/>
</dbReference>
<dbReference type="RefSeq" id="NP_001375350.1">
    <molecule id="Q8TAX9-6"/>
    <property type="nucleotide sequence ID" value="NM_001388421.1"/>
</dbReference>
<dbReference type="RefSeq" id="NP_001375351.1">
    <molecule id="Q8TAX9-3"/>
    <property type="nucleotide sequence ID" value="NM_001388422.1"/>
</dbReference>
<dbReference type="RefSeq" id="NP_001375352.1">
    <molecule id="Q8TAX9-2"/>
    <property type="nucleotide sequence ID" value="NM_001388423.1"/>
</dbReference>
<dbReference type="RefSeq" id="NP_061000.2">
    <molecule id="Q8TAX9-2"/>
    <property type="nucleotide sequence ID" value="NM_018530.3"/>
</dbReference>
<dbReference type="RefSeq" id="XP_016880339.1">
    <property type="nucleotide sequence ID" value="XM_017024850.1"/>
</dbReference>
<dbReference type="RefSeq" id="XP_016880340.1">
    <property type="nucleotide sequence ID" value="XM_017024851.1"/>
</dbReference>
<dbReference type="RefSeq" id="XP_016880341.1">
    <property type="nucleotide sequence ID" value="XM_017024852.1"/>
</dbReference>
<dbReference type="PDB" id="5TIB">
    <property type="method" value="X-ray"/>
    <property type="resolution" value="2.60 A"/>
    <property type="chains" value="A/B=251-411"/>
</dbReference>
<dbReference type="PDB" id="5TJ2">
    <property type="method" value="X-ray"/>
    <property type="resolution" value="2.80 A"/>
    <property type="chains" value="A/B/C/D=251-411"/>
</dbReference>
<dbReference type="PDB" id="5TJ4">
    <property type="method" value="X-ray"/>
    <property type="resolution" value="3.50 A"/>
    <property type="chains" value="A/B/C/D/E/F/G/H/I/J=222-413"/>
</dbReference>
<dbReference type="PDB" id="7WJQ">
    <property type="method" value="X-ray"/>
    <property type="resolution" value="2.70 A"/>
    <property type="chains" value="B=1-411"/>
</dbReference>
<dbReference type="PDB" id="8EFP">
    <property type="method" value="EM"/>
    <property type="resolution" value="3.80 A"/>
    <property type="chains" value="C=1-416"/>
</dbReference>
<dbReference type="PDB" id="8ET1">
    <property type="method" value="EM"/>
    <property type="resolution" value="4.48 A"/>
    <property type="chains" value="A/B/C/D/E/F/G/H/I/J/K/L/M/N/O/P/Q/R/S/T/U/V/W/X=1-416"/>
</dbReference>
<dbReference type="PDB" id="8ET2">
    <property type="method" value="EM"/>
    <property type="resolution" value="4.96 A"/>
    <property type="chains" value="A/B/C/D/E/F/G/H/I/J/K/L/M/N/O/P/Q/R/S/T/U/V/W/X=1-416"/>
</dbReference>
<dbReference type="PDB" id="8GTJ">
    <property type="method" value="X-ray"/>
    <property type="resolution" value="2.70 A"/>
    <property type="chains" value="A/C=1-416"/>
</dbReference>
<dbReference type="PDB" id="8GTK">
    <property type="method" value="X-ray"/>
    <property type="resolution" value="3.10 A"/>
    <property type="chains" value="A=1-416"/>
</dbReference>
<dbReference type="PDB" id="8GTN">
    <property type="method" value="EM"/>
    <property type="resolution" value="3.17 A"/>
    <property type="chains" value="A/AA/B/BA/C/D/E/F/G/H/I/J/K/L/M/N/O/P/Q/R/S/T/V/W/X/Y/Z=1-235"/>
</dbReference>
<dbReference type="PDBsum" id="5TIB"/>
<dbReference type="PDBsum" id="5TJ2"/>
<dbReference type="PDBsum" id="5TJ4"/>
<dbReference type="PDBsum" id="7WJQ"/>
<dbReference type="PDBsum" id="8EFP"/>
<dbReference type="PDBsum" id="8ET1"/>
<dbReference type="PDBsum" id="8ET2"/>
<dbReference type="PDBsum" id="8GTJ"/>
<dbReference type="PDBsum" id="8GTK"/>
<dbReference type="PDBsum" id="8GTN"/>
<dbReference type="EMDB" id="EMD-28087"/>
<dbReference type="EMDB" id="EMD-28583"/>
<dbReference type="EMDB" id="EMD-28584"/>
<dbReference type="EMDB" id="EMD-34258"/>
<dbReference type="SMR" id="Q8TAX9"/>
<dbReference type="BioGRID" id="120972">
    <property type="interactions" value="11"/>
</dbReference>
<dbReference type="FunCoup" id="Q8TAX9">
    <property type="interactions" value="3"/>
</dbReference>
<dbReference type="IntAct" id="Q8TAX9">
    <property type="interactions" value="6"/>
</dbReference>
<dbReference type="STRING" id="9606.ENSP00000415049"/>
<dbReference type="TCDB" id="1.C.123.1.3">
    <property type="family name" value="the pore-forming gasdermin (gasdermin) family"/>
</dbReference>
<dbReference type="GlyGen" id="Q8TAX9">
    <property type="glycosylation" value="2 sites, 1 O-linked glycan (1 site)"/>
</dbReference>
<dbReference type="iPTMnet" id="Q8TAX9"/>
<dbReference type="PhosphoSitePlus" id="Q8TAX9"/>
<dbReference type="SwissPalm" id="Q8TAX9"/>
<dbReference type="BioMuta" id="GSDMB"/>
<dbReference type="DMDM" id="182647404"/>
<dbReference type="jPOST" id="Q8TAX9"/>
<dbReference type="MassIVE" id="Q8TAX9"/>
<dbReference type="PaxDb" id="9606-ENSP00000415049"/>
<dbReference type="PeptideAtlas" id="Q8TAX9"/>
<dbReference type="ProteomicsDB" id="73934">
    <molecule id="Q8TAX9-1"/>
</dbReference>
<dbReference type="ProteomicsDB" id="73935">
    <molecule id="Q8TAX9-2"/>
</dbReference>
<dbReference type="ProteomicsDB" id="73936">
    <molecule id="Q8TAX9-3"/>
</dbReference>
<dbReference type="ProteomicsDB" id="73937">
    <molecule id="Q8TAX9-4"/>
</dbReference>
<dbReference type="ProteomicsDB" id="73938">
    <molecule id="Q8TAX9-5"/>
</dbReference>
<dbReference type="ProteomicsDB" id="73939">
    <molecule id="Q8TAX9-6"/>
</dbReference>
<dbReference type="Antibodypedia" id="4429">
    <property type="antibodies" value="225 antibodies from 31 providers"/>
</dbReference>
<dbReference type="DNASU" id="55876"/>
<dbReference type="Ensembl" id="ENST00000309481.11">
    <molecule id="Q8TAX9-3"/>
    <property type="protein sequence ID" value="ENSP00000312584.7"/>
    <property type="gene ID" value="ENSG00000073605.19"/>
</dbReference>
<dbReference type="Ensembl" id="ENST00000360317.7">
    <molecule id="Q8TAX9-4"/>
    <property type="protein sequence ID" value="ENSP00000353465.3"/>
    <property type="gene ID" value="ENSG00000073605.19"/>
</dbReference>
<dbReference type="Ensembl" id="ENST00000394175.6">
    <molecule id="Q8TAX9-2"/>
    <property type="protein sequence ID" value="ENSP00000377729.2"/>
    <property type="gene ID" value="ENSG00000073605.19"/>
</dbReference>
<dbReference type="Ensembl" id="ENST00000394179.5">
    <molecule id="Q8TAX9-3"/>
    <property type="protein sequence ID" value="ENSP00000377733.2"/>
    <property type="gene ID" value="ENSG00000073605.19"/>
</dbReference>
<dbReference type="Ensembl" id="ENST00000418519.6">
    <molecule id="Q8TAX9-4"/>
    <property type="protein sequence ID" value="ENSP00000415049.1"/>
    <property type="gene ID" value="ENSG00000073605.19"/>
</dbReference>
<dbReference type="Ensembl" id="ENST00000520542.5">
    <molecule id="Q8TAX9-6"/>
    <property type="protein sequence ID" value="ENSP00000430157.1"/>
    <property type="gene ID" value="ENSG00000073605.19"/>
</dbReference>
<dbReference type="GeneID" id="55876"/>
<dbReference type="KEGG" id="hsa:55876"/>
<dbReference type="MANE-Select" id="ENST00000418519.6">
    <property type="protein sequence ID" value="ENSP00000415049.1"/>
    <property type="RefSeq nucleotide sequence ID" value="NM_001165958.2"/>
    <property type="RefSeq protein sequence ID" value="NP_001159430.1"/>
</dbReference>
<dbReference type="UCSC" id="uc002htg.3">
    <molecule id="Q8TAX9-4"/>
    <property type="organism name" value="human"/>
</dbReference>
<dbReference type="AGR" id="HGNC:23690"/>
<dbReference type="CTD" id="55876"/>
<dbReference type="DisGeNET" id="55876"/>
<dbReference type="GeneCards" id="GSDMB"/>
<dbReference type="HGNC" id="HGNC:23690">
    <property type="gene designation" value="GSDMB"/>
</dbReference>
<dbReference type="HPA" id="ENSG00000073605">
    <property type="expression patterns" value="Tissue enhanced (intestine, liver, stomach)"/>
</dbReference>
<dbReference type="MIM" id="611221">
    <property type="type" value="gene"/>
</dbReference>
<dbReference type="neXtProt" id="NX_Q8TAX9"/>
<dbReference type="OpenTargets" id="ENSG00000073605"/>
<dbReference type="PharmGKB" id="PA162390303"/>
<dbReference type="VEuPathDB" id="HostDB:ENSG00000073605"/>
<dbReference type="eggNOG" id="ENOG502TDKS">
    <property type="taxonomic scope" value="Eukaryota"/>
</dbReference>
<dbReference type="GeneTree" id="ENSGT00950000183140"/>
<dbReference type="HOGENOM" id="CLU_058837_0_0_1"/>
<dbReference type="InParanoid" id="Q8TAX9"/>
<dbReference type="OMA" id="FHCFYLV"/>
<dbReference type="OrthoDB" id="9944616at2759"/>
<dbReference type="PAN-GO" id="Q8TAX9">
    <property type="GO annotations" value="5 GO annotations based on evolutionary models"/>
</dbReference>
<dbReference type="PhylomeDB" id="Q8TAX9"/>
<dbReference type="TreeFam" id="TF331886"/>
<dbReference type="PathwayCommons" id="Q8TAX9"/>
<dbReference type="SignaLink" id="Q8TAX9"/>
<dbReference type="BioGRID-ORCS" id="55876">
    <property type="hits" value="22 hits in 1156 CRISPR screens"/>
</dbReference>
<dbReference type="ChiTaRS" id="GSDMB">
    <property type="organism name" value="human"/>
</dbReference>
<dbReference type="GenomeRNAi" id="55876"/>
<dbReference type="Pharos" id="Q8TAX9">
    <property type="development level" value="Tbio"/>
</dbReference>
<dbReference type="PRO" id="PR:Q8TAX9"/>
<dbReference type="Proteomes" id="UP000005640">
    <property type="component" value="Chromosome 17"/>
</dbReference>
<dbReference type="RNAct" id="Q8TAX9">
    <property type="molecule type" value="protein"/>
</dbReference>
<dbReference type="Bgee" id="ENSG00000073605">
    <property type="expression patterns" value="Expressed in rectum and 128 other cell types or tissues"/>
</dbReference>
<dbReference type="ExpressionAtlas" id="Q8TAX9">
    <property type="expression patterns" value="baseline and differential"/>
</dbReference>
<dbReference type="GO" id="GO:0005737">
    <property type="term" value="C:cytoplasm"/>
    <property type="evidence" value="ECO:0007669"/>
    <property type="project" value="UniProtKB-SubCell"/>
</dbReference>
<dbReference type="GO" id="GO:0005886">
    <property type="term" value="C:plasma membrane"/>
    <property type="evidence" value="ECO:0000314"/>
    <property type="project" value="UniProt"/>
</dbReference>
<dbReference type="GO" id="GO:1901612">
    <property type="term" value="F:cardiolipin binding"/>
    <property type="evidence" value="ECO:0000314"/>
    <property type="project" value="UniProtKB"/>
</dbReference>
<dbReference type="GO" id="GO:0005546">
    <property type="term" value="F:phosphatidylinositol-4,5-bisphosphate binding"/>
    <property type="evidence" value="ECO:0000318"/>
    <property type="project" value="GO_Central"/>
</dbReference>
<dbReference type="GO" id="GO:0070273">
    <property type="term" value="F:phosphatidylinositol-4-phosphate binding"/>
    <property type="evidence" value="ECO:0000318"/>
    <property type="project" value="GO_Central"/>
</dbReference>
<dbReference type="GO" id="GO:0001786">
    <property type="term" value="F:phosphatidylserine binding"/>
    <property type="evidence" value="ECO:0000318"/>
    <property type="project" value="GO_Central"/>
</dbReference>
<dbReference type="GO" id="GO:0005543">
    <property type="term" value="F:phospholipid binding"/>
    <property type="evidence" value="ECO:0000314"/>
    <property type="project" value="UniProt"/>
</dbReference>
<dbReference type="GO" id="GO:0022829">
    <property type="term" value="F:wide pore channel activity"/>
    <property type="evidence" value="ECO:0000314"/>
    <property type="project" value="UniProtKB"/>
</dbReference>
<dbReference type="GO" id="GO:1902483">
    <property type="term" value="P:cytotoxic T cell pyroptotic cell death"/>
    <property type="evidence" value="ECO:0000314"/>
    <property type="project" value="UniProtKB"/>
</dbReference>
<dbReference type="GO" id="GO:0042742">
    <property type="term" value="P:defense response to bacterium"/>
    <property type="evidence" value="ECO:0000318"/>
    <property type="project" value="GO_Central"/>
</dbReference>
<dbReference type="GO" id="GO:0050829">
    <property type="term" value="P:defense response to Gram-negative bacterium"/>
    <property type="evidence" value="ECO:0000314"/>
    <property type="project" value="UniProtKB"/>
</dbReference>
<dbReference type="GO" id="GO:0051873">
    <property type="term" value="P:killing by host of symbiont cells"/>
    <property type="evidence" value="ECO:0000314"/>
    <property type="project" value="UniProtKB"/>
</dbReference>
<dbReference type="GO" id="GO:0031640">
    <property type="term" value="P:killing of cells of another organism"/>
    <property type="evidence" value="ECO:0007669"/>
    <property type="project" value="UniProtKB-KW"/>
</dbReference>
<dbReference type="GO" id="GO:0012501">
    <property type="term" value="P:programmed cell death"/>
    <property type="evidence" value="ECO:0007669"/>
    <property type="project" value="UniProtKB-KW"/>
</dbReference>
<dbReference type="GO" id="GO:0070269">
    <property type="term" value="P:pyroptotic inflammatory response"/>
    <property type="evidence" value="ECO:0000314"/>
    <property type="project" value="UniProtKB"/>
</dbReference>
<dbReference type="InterPro" id="IPR007677">
    <property type="entry name" value="Gasdermin"/>
</dbReference>
<dbReference type="InterPro" id="IPR040460">
    <property type="entry name" value="Gasdermin_pore"/>
</dbReference>
<dbReference type="InterPro" id="IPR041263">
    <property type="entry name" value="Gasdermin_PUB"/>
</dbReference>
<dbReference type="PANTHER" id="PTHR16399">
    <property type="entry name" value="GASDERMIN"/>
    <property type="match status" value="1"/>
</dbReference>
<dbReference type="PANTHER" id="PTHR16399:SF20">
    <property type="entry name" value="GASDERMIN-B"/>
    <property type="match status" value="1"/>
</dbReference>
<dbReference type="Pfam" id="PF04598">
    <property type="entry name" value="Gasdermin"/>
    <property type="match status" value="1"/>
</dbReference>
<dbReference type="Pfam" id="PF17708">
    <property type="entry name" value="Gasdermin_C"/>
    <property type="match status" value="1"/>
</dbReference>